<name>NNRE_RHOCB</name>
<evidence type="ECO:0000255" key="1">
    <source>
        <dbReference type="HAMAP-Rule" id="MF_01966"/>
    </source>
</evidence>
<reference key="1">
    <citation type="journal article" date="2010" name="J. Bacteriol.">
        <title>Complete genome sequence of the photosynthetic purple nonsulfur bacterium Rhodobacter capsulatus SB 1003.</title>
        <authorList>
            <person name="Strnad H."/>
            <person name="Lapidus A."/>
            <person name="Paces J."/>
            <person name="Ulbrich P."/>
            <person name="Vlcek C."/>
            <person name="Paces V."/>
            <person name="Haselkorn R."/>
        </authorList>
    </citation>
    <scope>NUCLEOTIDE SEQUENCE [LARGE SCALE GENOMIC DNA]</scope>
    <source>
        <strain>ATCC BAA-309 / NBRC 16581 / SB1003</strain>
    </source>
</reference>
<keyword id="KW-0413">Isomerase</keyword>
<keyword id="KW-0479">Metal-binding</keyword>
<keyword id="KW-0520">NAD</keyword>
<keyword id="KW-0521">NADP</keyword>
<keyword id="KW-0547">Nucleotide-binding</keyword>
<keyword id="KW-0630">Potassium</keyword>
<keyword id="KW-1185">Reference proteome</keyword>
<organism>
    <name type="scientific">Rhodobacter capsulatus (strain ATCC BAA-309 / NBRC 16581 / SB1003)</name>
    <dbReference type="NCBI Taxonomy" id="272942"/>
    <lineage>
        <taxon>Bacteria</taxon>
        <taxon>Pseudomonadati</taxon>
        <taxon>Pseudomonadota</taxon>
        <taxon>Alphaproteobacteria</taxon>
        <taxon>Rhodobacterales</taxon>
        <taxon>Rhodobacter group</taxon>
        <taxon>Rhodobacter</taxon>
    </lineage>
</organism>
<proteinExistence type="inferred from homology"/>
<sequence length="212" mass="22368">MTEILTSDDMRSLERAAIASGRASGLELMERAGAAVVEAIAEAWPDIRPPAVALRHAMILCGPGNNGGDGFVVARLLRRRGWKVTLYLYGEADRLPPDARANHDRWRRIGTIAPLPAAPDFSSADLVVDALFGLGLTRPLTGFGPIFAALASAGRPVLAIDLPSGRDADARADAAGWPSAPCSLAVTFHREKPAHAQLRAEGIGVIVKPIGL</sequence>
<gene>
    <name evidence="1" type="primary">nnrE</name>
    <name type="ordered locus">RCAP_rcc01672</name>
</gene>
<accession>D5ATX8</accession>
<dbReference type="EC" id="5.1.99.6" evidence="1"/>
<dbReference type="EMBL" id="CP001312">
    <property type="protein sequence ID" value="ADE85417.1"/>
    <property type="molecule type" value="Genomic_DNA"/>
</dbReference>
<dbReference type="RefSeq" id="WP_013067396.1">
    <property type="nucleotide sequence ID" value="NC_014034.1"/>
</dbReference>
<dbReference type="SMR" id="D5ATX8"/>
<dbReference type="STRING" id="272942.RCAP_rcc01672"/>
<dbReference type="GeneID" id="95969832"/>
<dbReference type="KEGG" id="rcp:RCAP_rcc01672"/>
<dbReference type="eggNOG" id="COG0062">
    <property type="taxonomic scope" value="Bacteria"/>
</dbReference>
<dbReference type="HOGENOM" id="CLU_024853_0_1_5"/>
<dbReference type="OrthoDB" id="9806925at2"/>
<dbReference type="Proteomes" id="UP000002361">
    <property type="component" value="Chromosome"/>
</dbReference>
<dbReference type="GO" id="GO:0046872">
    <property type="term" value="F:metal ion binding"/>
    <property type="evidence" value="ECO:0007669"/>
    <property type="project" value="UniProtKB-KW"/>
</dbReference>
<dbReference type="GO" id="GO:0052856">
    <property type="term" value="F:NAD(P)HX epimerase activity"/>
    <property type="evidence" value="ECO:0007669"/>
    <property type="project" value="UniProtKB-UniRule"/>
</dbReference>
<dbReference type="GO" id="GO:0000166">
    <property type="term" value="F:nucleotide binding"/>
    <property type="evidence" value="ECO:0007669"/>
    <property type="project" value="UniProtKB-KW"/>
</dbReference>
<dbReference type="Gene3D" id="3.40.50.10260">
    <property type="entry name" value="YjeF N-terminal domain"/>
    <property type="match status" value="1"/>
</dbReference>
<dbReference type="HAMAP" id="MF_01966">
    <property type="entry name" value="NADHX_epimerase"/>
    <property type="match status" value="1"/>
</dbReference>
<dbReference type="InterPro" id="IPR004443">
    <property type="entry name" value="YjeF_N_dom"/>
</dbReference>
<dbReference type="InterPro" id="IPR036652">
    <property type="entry name" value="YjeF_N_dom_sf"/>
</dbReference>
<dbReference type="NCBIfam" id="TIGR00197">
    <property type="entry name" value="yjeF_nterm"/>
    <property type="match status" value="1"/>
</dbReference>
<dbReference type="Pfam" id="PF03853">
    <property type="entry name" value="YjeF_N"/>
    <property type="match status" value="1"/>
</dbReference>
<dbReference type="SUPFAM" id="SSF64153">
    <property type="entry name" value="YjeF N-terminal domain-like"/>
    <property type="match status" value="1"/>
</dbReference>
<dbReference type="PROSITE" id="PS51385">
    <property type="entry name" value="YJEF_N"/>
    <property type="match status" value="1"/>
</dbReference>
<feature type="chain" id="PRO_0000416375" description="NAD(P)H-hydrate epimerase">
    <location>
        <begin position="1"/>
        <end position="212"/>
    </location>
</feature>
<feature type="domain" description="YjeF N-terminal" evidence="1">
    <location>
        <begin position="10"/>
        <end position="212"/>
    </location>
</feature>
<feature type="binding site" evidence="1">
    <location>
        <begin position="65"/>
        <end position="69"/>
    </location>
    <ligand>
        <name>(6S)-NADPHX</name>
        <dbReference type="ChEBI" id="CHEBI:64076"/>
    </ligand>
</feature>
<feature type="binding site" evidence="1">
    <location>
        <position position="66"/>
    </location>
    <ligand>
        <name>K(+)</name>
        <dbReference type="ChEBI" id="CHEBI:29103"/>
    </ligand>
</feature>
<feature type="binding site" evidence="1">
    <location>
        <position position="129"/>
    </location>
    <ligand>
        <name>K(+)</name>
        <dbReference type="ChEBI" id="CHEBI:29103"/>
    </ligand>
</feature>
<feature type="binding site" evidence="1">
    <location>
        <begin position="133"/>
        <end position="139"/>
    </location>
    <ligand>
        <name>(6S)-NADPHX</name>
        <dbReference type="ChEBI" id="CHEBI:64076"/>
    </ligand>
</feature>
<feature type="binding site" evidence="1">
    <location>
        <position position="161"/>
    </location>
    <ligand>
        <name>(6S)-NADPHX</name>
        <dbReference type="ChEBI" id="CHEBI:64076"/>
    </ligand>
</feature>
<feature type="binding site" evidence="1">
    <location>
        <position position="164"/>
    </location>
    <ligand>
        <name>K(+)</name>
        <dbReference type="ChEBI" id="CHEBI:29103"/>
    </ligand>
</feature>
<protein>
    <recommendedName>
        <fullName evidence="1">NAD(P)H-hydrate epimerase</fullName>
        <ecNumber evidence="1">5.1.99.6</ecNumber>
    </recommendedName>
    <alternativeName>
        <fullName evidence="1">NAD(P)HX epimerase</fullName>
    </alternativeName>
</protein>
<comment type="function">
    <text evidence="1">Catalyzes the epimerization of the S- and R-forms of NAD(P)HX, a damaged form of NAD(P)H that is a result of enzymatic or heat-dependent hydration. This is a prerequisite for the S-specific NAD(P)H-hydrate dehydratase to allow the repair of both epimers of NAD(P)HX.</text>
</comment>
<comment type="catalytic activity">
    <reaction evidence="1">
        <text>(6R)-NADHX = (6S)-NADHX</text>
        <dbReference type="Rhea" id="RHEA:32215"/>
        <dbReference type="ChEBI" id="CHEBI:64074"/>
        <dbReference type="ChEBI" id="CHEBI:64075"/>
        <dbReference type="EC" id="5.1.99.6"/>
    </reaction>
</comment>
<comment type="catalytic activity">
    <reaction evidence="1">
        <text>(6R)-NADPHX = (6S)-NADPHX</text>
        <dbReference type="Rhea" id="RHEA:32227"/>
        <dbReference type="ChEBI" id="CHEBI:64076"/>
        <dbReference type="ChEBI" id="CHEBI:64077"/>
        <dbReference type="EC" id="5.1.99.6"/>
    </reaction>
</comment>
<comment type="cofactor">
    <cofactor evidence="1">
        <name>K(+)</name>
        <dbReference type="ChEBI" id="CHEBI:29103"/>
    </cofactor>
    <text evidence="1">Binds 1 potassium ion per subunit.</text>
</comment>
<comment type="similarity">
    <text evidence="1">Belongs to the NnrE/AIBP family.</text>
</comment>